<proteinExistence type="predicted"/>
<evidence type="ECO:0000255" key="1">
    <source>
        <dbReference type="PROSITE-ProRule" id="PRU01163"/>
    </source>
</evidence>
<accession>O31535</accession>
<protein>
    <recommendedName>
        <fullName>Uncharacterized protein YetH</fullName>
    </recommendedName>
</protein>
<organism>
    <name type="scientific">Bacillus subtilis (strain 168)</name>
    <dbReference type="NCBI Taxonomy" id="224308"/>
    <lineage>
        <taxon>Bacteria</taxon>
        <taxon>Bacillati</taxon>
        <taxon>Bacillota</taxon>
        <taxon>Bacilli</taxon>
        <taxon>Bacillales</taxon>
        <taxon>Bacillaceae</taxon>
        <taxon>Bacillus</taxon>
    </lineage>
</organism>
<name>YETH_BACSU</name>
<gene>
    <name type="primary">yetH</name>
    <name type="ordered locus">BSU07160</name>
</gene>
<sequence>MIKQIGTVAVYVEDQQKAKQFWTEKVGFDIAADHPMGPEASWLEVAPKGAETRLVIYPKAMMKGSEQMKASIVFECEDIFGTYEKMKTNGVEFLGEPNQMEWGTFVQFKDEDGNVFLLKE</sequence>
<feature type="chain" id="PRO_0000360531" description="Uncharacterized protein YetH">
    <location>
        <begin position="1"/>
        <end position="120"/>
    </location>
</feature>
<feature type="domain" description="VOC" evidence="1">
    <location>
        <begin position="4"/>
        <end position="120"/>
    </location>
</feature>
<keyword id="KW-1185">Reference proteome</keyword>
<dbReference type="EMBL" id="AL009126">
    <property type="protein sequence ID" value="CAB12535.1"/>
    <property type="molecule type" value="Genomic_DNA"/>
</dbReference>
<dbReference type="PIR" id="E69798">
    <property type="entry name" value="E69798"/>
</dbReference>
<dbReference type="RefSeq" id="NP_388597.1">
    <property type="nucleotide sequence ID" value="NC_000964.3"/>
</dbReference>
<dbReference type="RefSeq" id="WP_003233803.1">
    <property type="nucleotide sequence ID" value="NZ_OZ025638.1"/>
</dbReference>
<dbReference type="SMR" id="O31535"/>
<dbReference type="FunCoup" id="O31535">
    <property type="interactions" value="4"/>
</dbReference>
<dbReference type="STRING" id="224308.BSU07160"/>
<dbReference type="PaxDb" id="224308-BSU07160"/>
<dbReference type="DNASU" id="938777"/>
<dbReference type="EnsemblBacteria" id="CAB12535">
    <property type="protein sequence ID" value="CAB12535"/>
    <property type="gene ID" value="BSU_07160"/>
</dbReference>
<dbReference type="GeneID" id="938777"/>
<dbReference type="KEGG" id="bsu:BSU07160"/>
<dbReference type="PATRIC" id="fig|224308.179.peg.776"/>
<dbReference type="eggNOG" id="COG0346">
    <property type="taxonomic scope" value="Bacteria"/>
</dbReference>
<dbReference type="InParanoid" id="O31535"/>
<dbReference type="OrthoDB" id="9803079at2"/>
<dbReference type="PhylomeDB" id="O31535"/>
<dbReference type="BioCyc" id="BSUB:BSU07160-MONOMER"/>
<dbReference type="Proteomes" id="UP000001570">
    <property type="component" value="Chromosome"/>
</dbReference>
<dbReference type="CDD" id="cd07263">
    <property type="entry name" value="VOC_like"/>
    <property type="match status" value="1"/>
</dbReference>
<dbReference type="Gene3D" id="3.10.180.10">
    <property type="entry name" value="2,3-Dihydroxybiphenyl 1,2-Dioxygenase, domain 1"/>
    <property type="match status" value="1"/>
</dbReference>
<dbReference type="InterPro" id="IPR029068">
    <property type="entry name" value="Glyas_Bleomycin-R_OHBP_Dase"/>
</dbReference>
<dbReference type="InterPro" id="IPR004360">
    <property type="entry name" value="Glyas_Fos-R_dOase_dom"/>
</dbReference>
<dbReference type="InterPro" id="IPR037523">
    <property type="entry name" value="VOC"/>
</dbReference>
<dbReference type="PANTHER" id="PTHR36437">
    <property type="entry name" value="GLYOXALASE/BLEOMYCIN RESISTANCE PROTEIN/DIOXYGENASE"/>
    <property type="match status" value="1"/>
</dbReference>
<dbReference type="PANTHER" id="PTHR36437:SF2">
    <property type="entry name" value="GLYOXALASE_BLEOMYCIN RESISTANCE PROTEIN_DIOXYGENASE"/>
    <property type="match status" value="1"/>
</dbReference>
<dbReference type="Pfam" id="PF00903">
    <property type="entry name" value="Glyoxalase"/>
    <property type="match status" value="1"/>
</dbReference>
<dbReference type="SUPFAM" id="SSF54593">
    <property type="entry name" value="Glyoxalase/Bleomycin resistance protein/Dihydroxybiphenyl dioxygenase"/>
    <property type="match status" value="1"/>
</dbReference>
<dbReference type="PROSITE" id="PS51819">
    <property type="entry name" value="VOC"/>
    <property type="match status" value="1"/>
</dbReference>
<reference key="1">
    <citation type="journal article" date="1997" name="Nature">
        <title>The complete genome sequence of the Gram-positive bacterium Bacillus subtilis.</title>
        <authorList>
            <person name="Kunst F."/>
            <person name="Ogasawara N."/>
            <person name="Moszer I."/>
            <person name="Albertini A.M."/>
            <person name="Alloni G."/>
            <person name="Azevedo V."/>
            <person name="Bertero M.G."/>
            <person name="Bessieres P."/>
            <person name="Bolotin A."/>
            <person name="Borchert S."/>
            <person name="Borriss R."/>
            <person name="Boursier L."/>
            <person name="Brans A."/>
            <person name="Braun M."/>
            <person name="Brignell S.C."/>
            <person name="Bron S."/>
            <person name="Brouillet S."/>
            <person name="Bruschi C.V."/>
            <person name="Caldwell B."/>
            <person name="Capuano V."/>
            <person name="Carter N.M."/>
            <person name="Choi S.-K."/>
            <person name="Codani J.-J."/>
            <person name="Connerton I.F."/>
            <person name="Cummings N.J."/>
            <person name="Daniel R.A."/>
            <person name="Denizot F."/>
            <person name="Devine K.M."/>
            <person name="Duesterhoeft A."/>
            <person name="Ehrlich S.D."/>
            <person name="Emmerson P.T."/>
            <person name="Entian K.-D."/>
            <person name="Errington J."/>
            <person name="Fabret C."/>
            <person name="Ferrari E."/>
            <person name="Foulger D."/>
            <person name="Fritz C."/>
            <person name="Fujita M."/>
            <person name="Fujita Y."/>
            <person name="Fuma S."/>
            <person name="Galizzi A."/>
            <person name="Galleron N."/>
            <person name="Ghim S.-Y."/>
            <person name="Glaser P."/>
            <person name="Goffeau A."/>
            <person name="Golightly E.J."/>
            <person name="Grandi G."/>
            <person name="Guiseppi G."/>
            <person name="Guy B.J."/>
            <person name="Haga K."/>
            <person name="Haiech J."/>
            <person name="Harwood C.R."/>
            <person name="Henaut A."/>
            <person name="Hilbert H."/>
            <person name="Holsappel S."/>
            <person name="Hosono S."/>
            <person name="Hullo M.-F."/>
            <person name="Itaya M."/>
            <person name="Jones L.-M."/>
            <person name="Joris B."/>
            <person name="Karamata D."/>
            <person name="Kasahara Y."/>
            <person name="Klaerr-Blanchard M."/>
            <person name="Klein C."/>
            <person name="Kobayashi Y."/>
            <person name="Koetter P."/>
            <person name="Koningstein G."/>
            <person name="Krogh S."/>
            <person name="Kumano M."/>
            <person name="Kurita K."/>
            <person name="Lapidus A."/>
            <person name="Lardinois S."/>
            <person name="Lauber J."/>
            <person name="Lazarevic V."/>
            <person name="Lee S.-M."/>
            <person name="Levine A."/>
            <person name="Liu H."/>
            <person name="Masuda S."/>
            <person name="Mauel C."/>
            <person name="Medigue C."/>
            <person name="Medina N."/>
            <person name="Mellado R.P."/>
            <person name="Mizuno M."/>
            <person name="Moestl D."/>
            <person name="Nakai S."/>
            <person name="Noback M."/>
            <person name="Noone D."/>
            <person name="O'Reilly M."/>
            <person name="Ogawa K."/>
            <person name="Ogiwara A."/>
            <person name="Oudega B."/>
            <person name="Park S.-H."/>
            <person name="Parro V."/>
            <person name="Pohl T.M."/>
            <person name="Portetelle D."/>
            <person name="Porwollik S."/>
            <person name="Prescott A.M."/>
            <person name="Presecan E."/>
            <person name="Pujic P."/>
            <person name="Purnelle B."/>
            <person name="Rapoport G."/>
            <person name="Rey M."/>
            <person name="Reynolds S."/>
            <person name="Rieger M."/>
            <person name="Rivolta C."/>
            <person name="Rocha E."/>
            <person name="Roche B."/>
            <person name="Rose M."/>
            <person name="Sadaie Y."/>
            <person name="Sato T."/>
            <person name="Scanlan E."/>
            <person name="Schleich S."/>
            <person name="Schroeter R."/>
            <person name="Scoffone F."/>
            <person name="Sekiguchi J."/>
            <person name="Sekowska A."/>
            <person name="Seror S.J."/>
            <person name="Serror P."/>
            <person name="Shin B.-S."/>
            <person name="Soldo B."/>
            <person name="Sorokin A."/>
            <person name="Tacconi E."/>
            <person name="Takagi T."/>
            <person name="Takahashi H."/>
            <person name="Takemaru K."/>
            <person name="Takeuchi M."/>
            <person name="Tamakoshi A."/>
            <person name="Tanaka T."/>
            <person name="Terpstra P."/>
            <person name="Tognoni A."/>
            <person name="Tosato V."/>
            <person name="Uchiyama S."/>
            <person name="Vandenbol M."/>
            <person name="Vannier F."/>
            <person name="Vassarotti A."/>
            <person name="Viari A."/>
            <person name="Wambutt R."/>
            <person name="Wedler E."/>
            <person name="Wedler H."/>
            <person name="Weitzenegger T."/>
            <person name="Winters P."/>
            <person name="Wipat A."/>
            <person name="Yamamoto H."/>
            <person name="Yamane K."/>
            <person name="Yasumoto K."/>
            <person name="Yata K."/>
            <person name="Yoshida K."/>
            <person name="Yoshikawa H.-F."/>
            <person name="Zumstein E."/>
            <person name="Yoshikawa H."/>
            <person name="Danchin A."/>
        </authorList>
    </citation>
    <scope>NUCLEOTIDE SEQUENCE [LARGE SCALE GENOMIC DNA]</scope>
    <source>
        <strain>168</strain>
    </source>
</reference>